<protein>
    <recommendedName>
        <fullName evidence="1">NAD kinase</fullName>
        <ecNumber evidence="1">2.7.1.23</ecNumber>
    </recommendedName>
    <alternativeName>
        <fullName evidence="1">ATP-dependent NAD kinase</fullName>
    </alternativeName>
</protein>
<sequence length="269" mass="30769">MRYTILTKGDSKSNALKHKMMNYMKDFRMIEDSENPEIVISVGGDGTLLQAFHQYSHMLSKVAFVGVHTGHLGFYADWLPHEVEKLIIEINNSEFQVIEYPLLEIIMRYNDNGYETRYLALNEATMKTENGSTLVVDVNLRGKHFERFRGDGLCVSTPSGSTAYNKALGGALIHPSLEAMQITEIASINNRVFRTVGSPLVLPKHHTCLISPVNHDTIRMTIDHVSIKHKNVNSIQYRVANEKVRFARFRPFPFWKRVHDSFISSDEER</sequence>
<organism>
    <name type="scientific">Staphylococcus aureus (strain COL)</name>
    <dbReference type="NCBI Taxonomy" id="93062"/>
    <lineage>
        <taxon>Bacteria</taxon>
        <taxon>Bacillati</taxon>
        <taxon>Bacillota</taxon>
        <taxon>Bacilli</taxon>
        <taxon>Bacillales</taxon>
        <taxon>Staphylococcaceae</taxon>
        <taxon>Staphylococcus</taxon>
    </lineage>
</organism>
<evidence type="ECO:0000255" key="1">
    <source>
        <dbReference type="HAMAP-Rule" id="MF_00361"/>
    </source>
</evidence>
<proteinExistence type="inferred from homology"/>
<comment type="function">
    <text evidence="1">Involved in the regulation of the intracellular balance of NAD and NADP, and is a key enzyme in the biosynthesis of NADP. Catalyzes specifically the phosphorylation on 2'-hydroxyl of the adenosine moiety of NAD to yield NADP.</text>
</comment>
<comment type="catalytic activity">
    <reaction evidence="1">
        <text>NAD(+) + ATP = ADP + NADP(+) + H(+)</text>
        <dbReference type="Rhea" id="RHEA:18629"/>
        <dbReference type="ChEBI" id="CHEBI:15378"/>
        <dbReference type="ChEBI" id="CHEBI:30616"/>
        <dbReference type="ChEBI" id="CHEBI:57540"/>
        <dbReference type="ChEBI" id="CHEBI:58349"/>
        <dbReference type="ChEBI" id="CHEBI:456216"/>
        <dbReference type="EC" id="2.7.1.23"/>
    </reaction>
</comment>
<comment type="cofactor">
    <cofactor evidence="1">
        <name>a divalent metal cation</name>
        <dbReference type="ChEBI" id="CHEBI:60240"/>
    </cofactor>
</comment>
<comment type="subcellular location">
    <subcellularLocation>
        <location evidence="1">Cytoplasm</location>
    </subcellularLocation>
</comment>
<comment type="similarity">
    <text evidence="1">Belongs to the NAD kinase family.</text>
</comment>
<feature type="chain" id="PRO_0000120658" description="NAD kinase">
    <location>
        <begin position="1"/>
        <end position="269"/>
    </location>
</feature>
<feature type="active site" description="Proton acceptor" evidence="1">
    <location>
        <position position="45"/>
    </location>
</feature>
<feature type="binding site" evidence="1">
    <location>
        <begin position="45"/>
        <end position="46"/>
    </location>
    <ligand>
        <name>NAD(+)</name>
        <dbReference type="ChEBI" id="CHEBI:57540"/>
    </ligand>
</feature>
<feature type="binding site" evidence="1">
    <location>
        <begin position="122"/>
        <end position="123"/>
    </location>
    <ligand>
        <name>NAD(+)</name>
        <dbReference type="ChEBI" id="CHEBI:57540"/>
    </ligand>
</feature>
<feature type="binding site" evidence="1">
    <location>
        <position position="149"/>
    </location>
    <ligand>
        <name>NAD(+)</name>
        <dbReference type="ChEBI" id="CHEBI:57540"/>
    </ligand>
</feature>
<feature type="binding site" evidence="1">
    <location>
        <position position="151"/>
    </location>
    <ligand>
        <name>NAD(+)</name>
        <dbReference type="ChEBI" id="CHEBI:57540"/>
    </ligand>
</feature>
<feature type="binding site" evidence="1">
    <location>
        <position position="186"/>
    </location>
    <ligand>
        <name>NAD(+)</name>
        <dbReference type="ChEBI" id="CHEBI:57540"/>
    </ligand>
</feature>
<accession>Q5HH78</accession>
<reference key="1">
    <citation type="journal article" date="2005" name="J. Bacteriol.">
        <title>Insights on evolution of virulence and resistance from the complete genome analysis of an early methicillin-resistant Staphylococcus aureus strain and a biofilm-producing methicillin-resistant Staphylococcus epidermidis strain.</title>
        <authorList>
            <person name="Gill S.R."/>
            <person name="Fouts D.E."/>
            <person name="Archer G.L."/>
            <person name="Mongodin E.F."/>
            <person name="DeBoy R.T."/>
            <person name="Ravel J."/>
            <person name="Paulsen I.T."/>
            <person name="Kolonay J.F."/>
            <person name="Brinkac L.M."/>
            <person name="Beanan M.J."/>
            <person name="Dodson R.J."/>
            <person name="Daugherty S.C."/>
            <person name="Madupu R."/>
            <person name="Angiuoli S.V."/>
            <person name="Durkin A.S."/>
            <person name="Haft D.H."/>
            <person name="Vamathevan J.J."/>
            <person name="Khouri H."/>
            <person name="Utterback T.R."/>
            <person name="Lee C."/>
            <person name="Dimitrov G."/>
            <person name="Jiang L."/>
            <person name="Qin H."/>
            <person name="Weidman J."/>
            <person name="Tran K."/>
            <person name="Kang K.H."/>
            <person name="Hance I.R."/>
            <person name="Nelson K.E."/>
            <person name="Fraser C.M."/>
        </authorList>
    </citation>
    <scope>NUCLEOTIDE SEQUENCE [LARGE SCALE GENOMIC DNA]</scope>
    <source>
        <strain>COL</strain>
    </source>
</reference>
<gene>
    <name evidence="1" type="primary">nadK</name>
    <name type="ordered locus">SACOL1011</name>
</gene>
<keyword id="KW-0067">ATP-binding</keyword>
<keyword id="KW-0963">Cytoplasm</keyword>
<keyword id="KW-0418">Kinase</keyword>
<keyword id="KW-0520">NAD</keyword>
<keyword id="KW-0521">NADP</keyword>
<keyword id="KW-0547">Nucleotide-binding</keyword>
<keyword id="KW-0808">Transferase</keyword>
<dbReference type="EC" id="2.7.1.23" evidence="1"/>
<dbReference type="EMBL" id="CP000046">
    <property type="protein sequence ID" value="AAW36479.1"/>
    <property type="molecule type" value="Genomic_DNA"/>
</dbReference>
<dbReference type="RefSeq" id="WP_001270834.1">
    <property type="nucleotide sequence ID" value="NZ_JBGOFO010000002.1"/>
</dbReference>
<dbReference type="SMR" id="Q5HH78"/>
<dbReference type="BindingDB" id="Q5HH78"/>
<dbReference type="ChEMBL" id="CHEMBL3707463"/>
<dbReference type="KEGG" id="sac:SACOL1011"/>
<dbReference type="HOGENOM" id="CLU_008831_0_3_9"/>
<dbReference type="Proteomes" id="UP000000530">
    <property type="component" value="Chromosome"/>
</dbReference>
<dbReference type="GO" id="GO:0005737">
    <property type="term" value="C:cytoplasm"/>
    <property type="evidence" value="ECO:0007669"/>
    <property type="project" value="UniProtKB-SubCell"/>
</dbReference>
<dbReference type="GO" id="GO:0005524">
    <property type="term" value="F:ATP binding"/>
    <property type="evidence" value="ECO:0007669"/>
    <property type="project" value="UniProtKB-KW"/>
</dbReference>
<dbReference type="GO" id="GO:0046872">
    <property type="term" value="F:metal ion binding"/>
    <property type="evidence" value="ECO:0007669"/>
    <property type="project" value="UniProtKB-UniRule"/>
</dbReference>
<dbReference type="GO" id="GO:0051287">
    <property type="term" value="F:NAD binding"/>
    <property type="evidence" value="ECO:0007669"/>
    <property type="project" value="UniProtKB-ARBA"/>
</dbReference>
<dbReference type="GO" id="GO:0003951">
    <property type="term" value="F:NAD+ kinase activity"/>
    <property type="evidence" value="ECO:0007669"/>
    <property type="project" value="UniProtKB-UniRule"/>
</dbReference>
<dbReference type="GO" id="GO:0019674">
    <property type="term" value="P:NAD metabolic process"/>
    <property type="evidence" value="ECO:0007669"/>
    <property type="project" value="InterPro"/>
</dbReference>
<dbReference type="GO" id="GO:0006741">
    <property type="term" value="P:NADP biosynthetic process"/>
    <property type="evidence" value="ECO:0007669"/>
    <property type="project" value="UniProtKB-UniRule"/>
</dbReference>
<dbReference type="FunFam" id="2.60.200.30:FF:000002">
    <property type="entry name" value="NAD kinase"/>
    <property type="match status" value="1"/>
</dbReference>
<dbReference type="Gene3D" id="3.40.50.10330">
    <property type="entry name" value="Probable inorganic polyphosphate/atp-NAD kinase, domain 1"/>
    <property type="match status" value="1"/>
</dbReference>
<dbReference type="Gene3D" id="2.60.200.30">
    <property type="entry name" value="Probable inorganic polyphosphate/atp-NAD kinase, domain 2"/>
    <property type="match status" value="1"/>
</dbReference>
<dbReference type="HAMAP" id="MF_00361">
    <property type="entry name" value="NAD_kinase"/>
    <property type="match status" value="1"/>
</dbReference>
<dbReference type="InterPro" id="IPR017438">
    <property type="entry name" value="ATP-NAD_kinase_N"/>
</dbReference>
<dbReference type="InterPro" id="IPR017437">
    <property type="entry name" value="ATP-NAD_kinase_PpnK-typ_C"/>
</dbReference>
<dbReference type="InterPro" id="IPR016064">
    <property type="entry name" value="NAD/diacylglycerol_kinase_sf"/>
</dbReference>
<dbReference type="InterPro" id="IPR002504">
    <property type="entry name" value="NADK"/>
</dbReference>
<dbReference type="NCBIfam" id="NF003424">
    <property type="entry name" value="PRK04885.1"/>
    <property type="match status" value="1"/>
</dbReference>
<dbReference type="PANTHER" id="PTHR20275">
    <property type="entry name" value="NAD KINASE"/>
    <property type="match status" value="1"/>
</dbReference>
<dbReference type="PANTHER" id="PTHR20275:SF0">
    <property type="entry name" value="NAD KINASE"/>
    <property type="match status" value="1"/>
</dbReference>
<dbReference type="Pfam" id="PF01513">
    <property type="entry name" value="NAD_kinase"/>
    <property type="match status" value="1"/>
</dbReference>
<dbReference type="Pfam" id="PF20143">
    <property type="entry name" value="NAD_kinase_C"/>
    <property type="match status" value="1"/>
</dbReference>
<dbReference type="SUPFAM" id="SSF111331">
    <property type="entry name" value="NAD kinase/diacylglycerol kinase-like"/>
    <property type="match status" value="1"/>
</dbReference>
<name>NADK_STAAC</name>